<protein>
    <recommendedName>
        <fullName>Cytochrome c oxidase subunit 2</fullName>
        <ecNumber>7.1.1.9</ecNumber>
    </recommendedName>
    <alternativeName>
        <fullName>Cytochrome c oxidase polypeptide II</fullName>
    </alternativeName>
</protein>
<name>COX2_CULQU</name>
<accession>P50693</accession>
<accession>A7LGN8</accession>
<accession>Q9B813</accession>
<proteinExistence type="inferred from homology"/>
<geneLocation type="mitochondrion"/>
<organism>
    <name type="scientific">Culex quinquefasciatus</name>
    <name type="common">Southern house mosquito</name>
    <name type="synonym">Culex pungens</name>
    <dbReference type="NCBI Taxonomy" id="7176"/>
    <lineage>
        <taxon>Eukaryota</taxon>
        <taxon>Metazoa</taxon>
        <taxon>Ecdysozoa</taxon>
        <taxon>Arthropoda</taxon>
        <taxon>Hexapoda</taxon>
        <taxon>Insecta</taxon>
        <taxon>Pterygota</taxon>
        <taxon>Neoptera</taxon>
        <taxon>Endopterygota</taxon>
        <taxon>Diptera</taxon>
        <taxon>Nematocera</taxon>
        <taxon>Culicoidea</taxon>
        <taxon>Culicidae</taxon>
        <taxon>Culicinae</taxon>
        <taxon>Culicini</taxon>
        <taxon>Culex</taxon>
        <taxon>Culex</taxon>
    </lineage>
</organism>
<keyword id="KW-0186">Copper</keyword>
<keyword id="KW-0249">Electron transport</keyword>
<keyword id="KW-0460">Magnesium</keyword>
<keyword id="KW-0472">Membrane</keyword>
<keyword id="KW-0479">Metal-binding</keyword>
<keyword id="KW-0496">Mitochondrion</keyword>
<keyword id="KW-0999">Mitochondrion inner membrane</keyword>
<keyword id="KW-1185">Reference proteome</keyword>
<keyword id="KW-0679">Respiratory chain</keyword>
<keyword id="KW-1278">Translocase</keyword>
<keyword id="KW-0812">Transmembrane</keyword>
<keyword id="KW-1133">Transmembrane helix</keyword>
<keyword id="KW-0813">Transport</keyword>
<gene>
    <name type="primary">COII</name>
    <name type="synonym">CO2</name>
</gene>
<reference key="1">
    <citation type="journal article" date="1995" name="J. Med. Entomol.">
        <title>Gene for cytochrome c oxidase subunit II in the mitochondrial DNA of Culex quinquefasciatus and Aedes aegypti (Diptera: Culicidae).</title>
        <authorList>
            <person name="Ho C.M."/>
            <person name="Liu Y.M."/>
            <person name="Wei Y.H."/>
            <person name="Hu S.T."/>
        </authorList>
    </citation>
    <scope>NUCLEOTIDE SEQUENCE [GENOMIC DNA]</scope>
    <source>
        <strain>Yi-lan</strain>
        <tissue>Larva</tissue>
    </source>
</reference>
<reference key="2">
    <citation type="submission" date="2000-12" db="EMBL/GenBank/DDBJ databases">
        <title>Molecular evolution of the mitochondrial cytochrome oxidase II gene in three mosquitoes.</title>
        <authorList>
            <person name="Wang J."/>
            <person name="Huang C."/>
        </authorList>
    </citation>
    <scope>NUCLEOTIDE SEQUENCE [GENOMIC DNA]</scope>
</reference>
<reference key="3">
    <citation type="submission" date="2007-07" db="EMBL/GenBank/DDBJ databases">
        <title>Phylogenetic relationships of some common Culex mosquitoes of Bangladesh based on nuclear and mitochondrial DNA.</title>
        <authorList>
            <person name="Hasan A.U."/>
            <person name="Suguri S."/>
            <person name="Abedin S.M."/>
            <person name="Fujimoto C."/>
            <person name="Itaki R."/>
            <person name="Harada M."/>
            <person name="Zaman R.U."/>
            <person name="Al Mamun M.A."/>
            <person name="Rahman M.A."/>
        </authorList>
    </citation>
    <scope>NUCLEOTIDE SEQUENCE [GENOMIC DNA]</scope>
</reference>
<comment type="function">
    <text evidence="1">Component of the cytochrome c oxidase, the last enzyme in the mitochondrial electron transport chain which drives oxidative phosphorylation. The respiratory chain contains 3 multisubunit complexes succinate dehydrogenase (complex II, CII), ubiquinol-cytochrome c oxidoreductase (cytochrome b-c1 complex, complex III, CIII) and cytochrome c oxidase (complex IV, CIV), that cooperate to transfer electrons derived from NADH and succinate to molecular oxygen, creating an electrochemical gradient over the inner membrane that drives transmembrane transport and the ATP synthase. Cytochrome c oxidase is the component of the respiratory chain that catalyzes the reduction of oxygen to water. Electrons originating from reduced cytochrome c in the intermembrane space (IMS) are transferred via the dinuclear copper A center (CU(A)) of subunit 2 and heme A of subunit 1 to the active site in subunit 1, a binuclear center (BNC) formed by heme A3 and copper B (CU(B)). The BNC reduces molecular oxygen to 2 water molecules using 4 electrons from cytochrome c in the IMS and 4 protons from the mitochondrial matrix.</text>
</comment>
<comment type="catalytic activity">
    <reaction evidence="1">
        <text>4 Fe(II)-[cytochrome c] + O2 + 8 H(+)(in) = 4 Fe(III)-[cytochrome c] + 2 H2O + 4 H(+)(out)</text>
        <dbReference type="Rhea" id="RHEA:11436"/>
        <dbReference type="Rhea" id="RHEA-COMP:10350"/>
        <dbReference type="Rhea" id="RHEA-COMP:14399"/>
        <dbReference type="ChEBI" id="CHEBI:15377"/>
        <dbReference type="ChEBI" id="CHEBI:15378"/>
        <dbReference type="ChEBI" id="CHEBI:15379"/>
        <dbReference type="ChEBI" id="CHEBI:29033"/>
        <dbReference type="ChEBI" id="CHEBI:29034"/>
        <dbReference type="EC" id="7.1.1.9"/>
    </reaction>
    <physiologicalReaction direction="left-to-right" evidence="1">
        <dbReference type="Rhea" id="RHEA:11437"/>
    </physiologicalReaction>
</comment>
<comment type="cofactor">
    <cofactor evidence="1">
        <name>Cu cation</name>
        <dbReference type="ChEBI" id="CHEBI:23378"/>
    </cofactor>
    <text evidence="1">Binds a dinuclear copper A center per subunit.</text>
</comment>
<comment type="subunit">
    <text evidence="1">Component of the cytochrome c oxidase (complex IV, CIV), a multisubunit enzyme composed of a catalytic core of 3 subunits and several supernumerary subunits. The complex exists as a monomer or a dimer and forms supercomplexes (SCs) in the inner mitochondrial membrane with ubiquinol-cytochrome c oxidoreductase (cytochrome b-c1 complex, complex III, CIII).</text>
</comment>
<comment type="subcellular location">
    <subcellularLocation>
        <location evidence="1">Mitochondrion inner membrane</location>
        <topology evidence="1">Multi-pass membrane protein</topology>
    </subcellularLocation>
</comment>
<comment type="similarity">
    <text evidence="3">Belongs to the cytochrome c oxidase subunit 2 family.</text>
</comment>
<dbReference type="EC" id="7.1.1.9"/>
<dbReference type="EMBL" id="L34351">
    <property type="protein sequence ID" value="AAA79167.1"/>
    <property type="molecule type" value="Genomic_DNA"/>
</dbReference>
<dbReference type="EMBL" id="AF325716">
    <property type="protein sequence ID" value="AAK14328.1"/>
    <property type="molecule type" value="Genomic_DNA"/>
</dbReference>
<dbReference type="EMBL" id="EU014281">
    <property type="protein sequence ID" value="ABS52760.1"/>
    <property type="molecule type" value="Genomic_DNA"/>
</dbReference>
<dbReference type="EMBL" id="EU014282">
    <property type="protein sequence ID" value="ABS52761.1"/>
    <property type="molecule type" value="Genomic_DNA"/>
</dbReference>
<dbReference type="SMR" id="P50693"/>
<dbReference type="FunCoup" id="P50693">
    <property type="interactions" value="106"/>
</dbReference>
<dbReference type="VEuPathDB" id="VectorBase:CPIJ040080"/>
<dbReference type="VEuPathDB" id="VectorBase:CQUJHB006026"/>
<dbReference type="eggNOG" id="KOG4767">
    <property type="taxonomic scope" value="Eukaryota"/>
</dbReference>
<dbReference type="HOGENOM" id="CLU_036876_2_3_1"/>
<dbReference type="InParanoid" id="P50693"/>
<dbReference type="OrthoDB" id="539285at2759"/>
<dbReference type="Proteomes" id="UP000002320">
    <property type="component" value="Unplaced"/>
</dbReference>
<dbReference type="GO" id="GO:0005743">
    <property type="term" value="C:mitochondrial inner membrane"/>
    <property type="evidence" value="ECO:0007669"/>
    <property type="project" value="UniProtKB-SubCell"/>
</dbReference>
<dbReference type="GO" id="GO:0005507">
    <property type="term" value="F:copper ion binding"/>
    <property type="evidence" value="ECO:0007669"/>
    <property type="project" value="InterPro"/>
</dbReference>
<dbReference type="GO" id="GO:0004129">
    <property type="term" value="F:cytochrome-c oxidase activity"/>
    <property type="evidence" value="ECO:0007669"/>
    <property type="project" value="UniProtKB-EC"/>
</dbReference>
<dbReference type="GO" id="GO:0042773">
    <property type="term" value="P:ATP synthesis coupled electron transport"/>
    <property type="evidence" value="ECO:0007669"/>
    <property type="project" value="TreeGrafter"/>
</dbReference>
<dbReference type="CDD" id="cd13912">
    <property type="entry name" value="CcO_II_C"/>
    <property type="match status" value="1"/>
</dbReference>
<dbReference type="FunFam" id="1.10.287.90:FF:000006">
    <property type="entry name" value="Cytochrome c oxidase subunit 2"/>
    <property type="match status" value="1"/>
</dbReference>
<dbReference type="FunFam" id="2.60.40.420:FF:000001">
    <property type="entry name" value="Cytochrome c oxidase subunit 2"/>
    <property type="match status" value="1"/>
</dbReference>
<dbReference type="Gene3D" id="1.10.287.90">
    <property type="match status" value="1"/>
</dbReference>
<dbReference type="Gene3D" id="2.60.40.420">
    <property type="entry name" value="Cupredoxins - blue copper proteins"/>
    <property type="match status" value="1"/>
</dbReference>
<dbReference type="InterPro" id="IPR045187">
    <property type="entry name" value="CcO_II"/>
</dbReference>
<dbReference type="InterPro" id="IPR002429">
    <property type="entry name" value="CcO_II-like_C"/>
</dbReference>
<dbReference type="InterPro" id="IPR034210">
    <property type="entry name" value="CcO_II_C"/>
</dbReference>
<dbReference type="InterPro" id="IPR001505">
    <property type="entry name" value="Copper_CuA"/>
</dbReference>
<dbReference type="InterPro" id="IPR008972">
    <property type="entry name" value="Cupredoxin"/>
</dbReference>
<dbReference type="InterPro" id="IPR014222">
    <property type="entry name" value="Cyt_c_oxidase_su2"/>
</dbReference>
<dbReference type="InterPro" id="IPR011759">
    <property type="entry name" value="Cyt_c_oxidase_su2_TM_dom"/>
</dbReference>
<dbReference type="InterPro" id="IPR036257">
    <property type="entry name" value="Cyt_c_oxidase_su2_TM_sf"/>
</dbReference>
<dbReference type="NCBIfam" id="TIGR02866">
    <property type="entry name" value="CoxB"/>
    <property type="match status" value="1"/>
</dbReference>
<dbReference type="PANTHER" id="PTHR22888:SF9">
    <property type="entry name" value="CYTOCHROME C OXIDASE SUBUNIT 2"/>
    <property type="match status" value="1"/>
</dbReference>
<dbReference type="PANTHER" id="PTHR22888">
    <property type="entry name" value="CYTOCHROME C OXIDASE, SUBUNIT II"/>
    <property type="match status" value="1"/>
</dbReference>
<dbReference type="Pfam" id="PF00116">
    <property type="entry name" value="COX2"/>
    <property type="match status" value="1"/>
</dbReference>
<dbReference type="Pfam" id="PF02790">
    <property type="entry name" value="COX2_TM"/>
    <property type="match status" value="1"/>
</dbReference>
<dbReference type="PRINTS" id="PR01166">
    <property type="entry name" value="CYCOXIDASEII"/>
</dbReference>
<dbReference type="SUPFAM" id="SSF49503">
    <property type="entry name" value="Cupredoxins"/>
    <property type="match status" value="1"/>
</dbReference>
<dbReference type="SUPFAM" id="SSF81464">
    <property type="entry name" value="Cytochrome c oxidase subunit II-like, transmembrane region"/>
    <property type="match status" value="1"/>
</dbReference>
<dbReference type="PROSITE" id="PS00078">
    <property type="entry name" value="COX2"/>
    <property type="match status" value="1"/>
</dbReference>
<dbReference type="PROSITE" id="PS50857">
    <property type="entry name" value="COX2_CUA"/>
    <property type="match status" value="1"/>
</dbReference>
<dbReference type="PROSITE" id="PS50999">
    <property type="entry name" value="COX2_TM"/>
    <property type="match status" value="1"/>
</dbReference>
<feature type="chain" id="PRO_0000183561" description="Cytochrome c oxidase subunit 2">
    <location>
        <begin position="1"/>
        <end position="228"/>
    </location>
</feature>
<feature type="topological domain" description="Mitochondrial intermembrane" evidence="2">
    <location>
        <begin position="1"/>
        <end position="26"/>
    </location>
</feature>
<feature type="transmembrane region" description="Helical" evidence="2">
    <location>
        <begin position="27"/>
        <end position="48"/>
    </location>
</feature>
<feature type="topological domain" description="Mitochondrial matrix" evidence="2">
    <location>
        <begin position="49"/>
        <end position="62"/>
    </location>
</feature>
<feature type="transmembrane region" description="Helical" evidence="2">
    <location>
        <begin position="63"/>
        <end position="82"/>
    </location>
</feature>
<feature type="topological domain" description="Mitochondrial intermembrane" evidence="2">
    <location>
        <begin position="83"/>
        <end position="228"/>
    </location>
</feature>
<feature type="binding site" evidence="1">
    <location>
        <position position="161"/>
    </location>
    <ligand>
        <name>Cu cation</name>
        <dbReference type="ChEBI" id="CHEBI:23378"/>
        <label>A1</label>
    </ligand>
</feature>
<feature type="binding site" evidence="1">
    <location>
        <position position="196"/>
    </location>
    <ligand>
        <name>Cu cation</name>
        <dbReference type="ChEBI" id="CHEBI:23378"/>
        <label>A1</label>
    </ligand>
</feature>
<feature type="binding site" evidence="1">
    <location>
        <position position="196"/>
    </location>
    <ligand>
        <name>Cu cation</name>
        <dbReference type="ChEBI" id="CHEBI:23378"/>
        <label>A2</label>
    </ligand>
</feature>
<feature type="binding site" evidence="1">
    <location>
        <position position="198"/>
    </location>
    <ligand>
        <name>Cu cation</name>
        <dbReference type="ChEBI" id="CHEBI:23378"/>
        <label>A2</label>
    </ligand>
</feature>
<feature type="binding site" evidence="1">
    <location>
        <position position="198"/>
    </location>
    <ligand>
        <name>Mg(2+)</name>
        <dbReference type="ChEBI" id="CHEBI:18420"/>
        <note>ligand shared with subunit 1</note>
    </ligand>
</feature>
<feature type="binding site" evidence="1">
    <location>
        <position position="200"/>
    </location>
    <ligand>
        <name>Cu cation</name>
        <dbReference type="ChEBI" id="CHEBI:23378"/>
        <label>A1</label>
    </ligand>
</feature>
<feature type="binding site" evidence="1">
    <location>
        <position position="200"/>
    </location>
    <ligand>
        <name>Cu cation</name>
        <dbReference type="ChEBI" id="CHEBI:23378"/>
        <label>A2</label>
    </ligand>
</feature>
<feature type="binding site" evidence="1">
    <location>
        <position position="204"/>
    </location>
    <ligand>
        <name>Cu cation</name>
        <dbReference type="ChEBI" id="CHEBI:23378"/>
        <label>A2</label>
    </ligand>
</feature>
<feature type="binding site" evidence="1">
    <location>
        <position position="207"/>
    </location>
    <ligand>
        <name>Cu cation</name>
        <dbReference type="ChEBI" id="CHEBI:23378"/>
        <label>A1</label>
    </ligand>
</feature>
<feature type="sequence conflict" description="In Ref. 2; AAK14328." evidence="3" ref="2">
    <original>G</original>
    <variation>W</variation>
    <location>
        <position position="8"/>
    </location>
</feature>
<feature type="sequence conflict" description="In Ref. 2; AAK14328." evidence="3" ref="2">
    <original>L</original>
    <variation>S</variation>
    <location>
        <position position="135"/>
    </location>
</feature>
<sequence length="228" mass="26319">MATWANLGLQNSSSPLMEQLNFFHDHTVLILIMITVMITYVMGMLFFNKFTNRYLLHGQTIEIIWTILPAIILMFIAFPSLRLLYLLDEINSPLITLKAIGHQWYWSYEYSNFMNLEFDSYMIPTNELDLNGFRLLDVDNRIILPLNNQIRILVTATDVLHSWTVPSLGVKIDATPGRLNQTNFLINQSGLFFGQCSEICGANHSFMPIVIESIPMNYFIKWVSSQLN</sequence>
<evidence type="ECO:0000250" key="1">
    <source>
        <dbReference type="UniProtKB" id="P00410"/>
    </source>
</evidence>
<evidence type="ECO:0000255" key="2"/>
<evidence type="ECO:0000305" key="3"/>